<gene>
    <name evidence="2" type="primary">ttuA</name>
    <name evidence="5" type="ordered locus">TERTU_2253</name>
</gene>
<keyword id="KW-0067">ATP-binding</keyword>
<keyword id="KW-0276">Fatty acid metabolism</keyword>
<keyword id="KW-0436">Ligase</keyword>
<keyword id="KW-0443">Lipid metabolism</keyword>
<keyword id="KW-0547">Nucleotide-binding</keyword>
<keyword id="KW-1185">Reference proteome</keyword>
<dbReference type="EC" id="6.2.1.47" evidence="1"/>
<dbReference type="EMBL" id="CP001614">
    <property type="protein sequence ID" value="ACR14084.1"/>
    <property type="molecule type" value="Genomic_DNA"/>
</dbReference>
<dbReference type="RefSeq" id="WP_015820200.1">
    <property type="nucleotide sequence ID" value="NC_012997.1"/>
</dbReference>
<dbReference type="SMR" id="C5BK10"/>
<dbReference type="STRING" id="377629.TERTU_2253"/>
<dbReference type="KEGG" id="ttu:TERTU_2253"/>
<dbReference type="eggNOG" id="COG0318">
    <property type="taxonomic scope" value="Bacteria"/>
</dbReference>
<dbReference type="HOGENOM" id="CLU_000022_23_7_6"/>
<dbReference type="OrthoDB" id="5296889at2"/>
<dbReference type="BioCyc" id="MetaCyc:MONOMER-21178"/>
<dbReference type="Proteomes" id="UP000009080">
    <property type="component" value="Chromosome"/>
</dbReference>
<dbReference type="GO" id="GO:0005886">
    <property type="term" value="C:plasma membrane"/>
    <property type="evidence" value="ECO:0007669"/>
    <property type="project" value="TreeGrafter"/>
</dbReference>
<dbReference type="GO" id="GO:0070566">
    <property type="term" value="F:adenylyltransferase activity"/>
    <property type="evidence" value="ECO:0007669"/>
    <property type="project" value="TreeGrafter"/>
</dbReference>
<dbReference type="GO" id="GO:0005524">
    <property type="term" value="F:ATP binding"/>
    <property type="evidence" value="ECO:0007669"/>
    <property type="project" value="UniProtKB-KW"/>
</dbReference>
<dbReference type="GO" id="GO:0016874">
    <property type="term" value="F:ligase activity"/>
    <property type="evidence" value="ECO:0007669"/>
    <property type="project" value="UniProtKB-KW"/>
</dbReference>
<dbReference type="GO" id="GO:0071766">
    <property type="term" value="P:Actinobacterium-type cell wall biogenesis"/>
    <property type="evidence" value="ECO:0007669"/>
    <property type="project" value="UniProtKB-ARBA"/>
</dbReference>
<dbReference type="GO" id="GO:0006633">
    <property type="term" value="P:fatty acid biosynthetic process"/>
    <property type="evidence" value="ECO:0007669"/>
    <property type="project" value="TreeGrafter"/>
</dbReference>
<dbReference type="CDD" id="cd05931">
    <property type="entry name" value="FAAL"/>
    <property type="match status" value="1"/>
</dbReference>
<dbReference type="FunFam" id="3.40.50.12780:FF:000013">
    <property type="entry name" value="Long-chain-fatty-acid--AMP ligase FadD32"/>
    <property type="match status" value="1"/>
</dbReference>
<dbReference type="Gene3D" id="3.30.300.30">
    <property type="match status" value="1"/>
</dbReference>
<dbReference type="Gene3D" id="3.40.50.12780">
    <property type="entry name" value="N-terminal domain of ligase-like"/>
    <property type="match status" value="1"/>
</dbReference>
<dbReference type="InterPro" id="IPR025110">
    <property type="entry name" value="AMP-bd_C"/>
</dbReference>
<dbReference type="InterPro" id="IPR045851">
    <property type="entry name" value="AMP-bd_C_sf"/>
</dbReference>
<dbReference type="InterPro" id="IPR020845">
    <property type="entry name" value="AMP-binding_CS"/>
</dbReference>
<dbReference type="InterPro" id="IPR000873">
    <property type="entry name" value="AMP-dep_synth/lig_dom"/>
</dbReference>
<dbReference type="InterPro" id="IPR042099">
    <property type="entry name" value="ANL_N_sf"/>
</dbReference>
<dbReference type="InterPro" id="IPR040097">
    <property type="entry name" value="FAAL/FAAC"/>
</dbReference>
<dbReference type="PANTHER" id="PTHR22754:SF32">
    <property type="entry name" value="DISCO-INTERACTING PROTEIN 2"/>
    <property type="match status" value="1"/>
</dbReference>
<dbReference type="PANTHER" id="PTHR22754">
    <property type="entry name" value="DISCO-INTERACTING PROTEIN 2 DIP2 -RELATED"/>
    <property type="match status" value="1"/>
</dbReference>
<dbReference type="Pfam" id="PF00501">
    <property type="entry name" value="AMP-binding"/>
    <property type="match status" value="1"/>
</dbReference>
<dbReference type="Pfam" id="PF23024">
    <property type="entry name" value="AMP-dom_DIP2-like"/>
    <property type="match status" value="1"/>
</dbReference>
<dbReference type="SUPFAM" id="SSF56801">
    <property type="entry name" value="Acetyl-CoA synthetase-like"/>
    <property type="match status" value="1"/>
</dbReference>
<dbReference type="PROSITE" id="PS00455">
    <property type="entry name" value="AMP_BINDING"/>
    <property type="match status" value="1"/>
</dbReference>
<organism>
    <name type="scientific">Teredinibacter turnerae (strain ATCC 39867 / T7901)</name>
    <dbReference type="NCBI Taxonomy" id="377629"/>
    <lineage>
        <taxon>Bacteria</taxon>
        <taxon>Pseudomonadati</taxon>
        <taxon>Pseudomonadota</taxon>
        <taxon>Gammaproteobacteria</taxon>
        <taxon>Cellvibrionales</taxon>
        <taxon>Cellvibrionaceae</taxon>
        <taxon>Teredinibacter</taxon>
    </lineage>
</organism>
<proteinExistence type="evidence at protein level"/>
<reference key="1">
    <citation type="journal article" date="2009" name="PLoS ONE">
        <title>The complete genome of Teredinibacter turnerae T7901: an intracellular endosymbiont of marine wood-boring bivalves (shipworms).</title>
        <authorList>
            <person name="Yang J.C."/>
            <person name="Madupu R."/>
            <person name="Durkin A.S."/>
            <person name="Ekborg N.A."/>
            <person name="Pedamallu C.S."/>
            <person name="Hostetler J.B."/>
            <person name="Radune D."/>
            <person name="Toms B.S."/>
            <person name="Henrissat B."/>
            <person name="Coutinho P.M."/>
            <person name="Schwarz S."/>
            <person name="Field L."/>
            <person name="Trindade-Silva A.E."/>
            <person name="Soares C.A.G."/>
            <person name="Elshahawi S."/>
            <person name="Hanora A."/>
            <person name="Schmidt E.W."/>
            <person name="Haygood M.G."/>
            <person name="Posfai J."/>
            <person name="Benner J."/>
            <person name="Madinger C."/>
            <person name="Nove J."/>
            <person name="Anton B."/>
            <person name="Chaudhary K."/>
            <person name="Foster J."/>
            <person name="Holman A."/>
            <person name="Kumar S."/>
            <person name="Lessard P.A."/>
            <person name="Luyten Y.A."/>
            <person name="Slatko B."/>
            <person name="Wood N."/>
            <person name="Wu B."/>
            <person name="Teplitski M."/>
            <person name="Mougous J.D."/>
            <person name="Ward N."/>
            <person name="Eisen J.A."/>
            <person name="Badger J.H."/>
            <person name="Distel D.L."/>
        </authorList>
    </citation>
    <scope>NUCLEOTIDE SEQUENCE [LARGE SCALE GENOMIC DNA]</scope>
    <source>
        <strain>ATCC 39867 / T7901</strain>
    </source>
</reference>
<reference key="2">
    <citation type="journal article" date="2015" name="ACS Chem. Biol.">
        <title>Bacterial genome mining of enzymatic tools for alkyne biosynthesis.</title>
        <authorList>
            <person name="Zhu X."/>
            <person name="Su M."/>
            <person name="Manickam K."/>
            <person name="Zhang W."/>
        </authorList>
    </citation>
    <scope>FUNCTION</scope>
    <scope>CATALYTIC ACTIVITY</scope>
    <source>
        <strain>ATCC 39867 / T7901</strain>
    </source>
</reference>
<protein>
    <recommendedName>
        <fullName evidence="3">Medium-chain-fatty-acid--[acyl-carrier-protein] ligase TtuA</fullName>
        <ecNumber evidence="1">6.2.1.47</ecNumber>
    </recommendedName>
</protein>
<sequence>MNSVIVEDDPTLIHRFLFHAENKPDALAYCFLEDGEIDRQRVSFRDLREMSTVVARIFSSVCQTQEPVLLALPNDCRFIVGFLATQLESLIAIPVYPPEGKHKRARFTSIVHSSGARVLLTSSEYIKRCSNYFSTLADDGVTVIDIDSLLNGLLLPLPQGVSDVNGTLVPGEVSTKATGLQGAESSVESYNVESYIEPSAKPDDISFVQYTSGSTGEPKGVVITHANLIENQRMIQRSFCHDESTVFGSWLPFYHDMGLVGNILQPLYLGIPCYFMAPIAFIQKPFRWLALISKYRVTTSGGPDFGYALCAKRVKDAQIASLDLTSWEVAFNGSEPVKLATITRFHAKFSSCGFSAKSMYPVYGMAEATLFISGGSRHNEPQALQIDSAELQRGRIIGAAENENSKSLVCCGDDIDRQQVCIVDPASRLPVADGSVGEIWVTGAHVAKSYFRNPELSRSTLAATFDSASDSNADQSQCKYLRTGDLGAVVSGDLYITGRLKDLIVMRGLNHHPHDIEATLQQLDASLGEYACACFTDNIGDVDFLTVVQEIAPTYAKSGSLEDLADKMCEELNQEHGLTLDSIYFVRPFTIPKTTSGKLQRSAMRSRLAENAVTPIWRYLSPRIAPLVTQNGTLEERVSYVR</sequence>
<comment type="function">
    <text evidence="1">Ligase likely involved in the biosynthesis of a polyyne metabolite (PubMed:26441143). Catalyzes the activation of decanoic acid, followed by the loading of the activated decanoic acid onto the acyl carrier protein TtuC (PubMed:26441143). Decanoic acid is the preferred substrate, but it can also use 10-undecenoic acid and lauric acid (PubMed:26441143). Nonanoic acid and 7-octenoic acid are only weakly activated (PubMed:26441143).</text>
</comment>
<comment type="catalytic activity">
    <reaction evidence="1">
        <text>a medium-chain fatty acid + holo-[ACP] + ATP = a medium-chain fatty acyl-[ACP] + AMP + diphosphate</text>
        <dbReference type="Rhea" id="RHEA:50460"/>
        <dbReference type="Rhea" id="RHEA-COMP:9685"/>
        <dbReference type="Rhea" id="RHEA-COMP:12681"/>
        <dbReference type="ChEBI" id="CHEBI:30616"/>
        <dbReference type="ChEBI" id="CHEBI:33019"/>
        <dbReference type="ChEBI" id="CHEBI:59558"/>
        <dbReference type="ChEBI" id="CHEBI:64479"/>
        <dbReference type="ChEBI" id="CHEBI:133242"/>
        <dbReference type="ChEBI" id="CHEBI:456215"/>
        <dbReference type="EC" id="6.2.1.47"/>
    </reaction>
</comment>
<comment type="catalytic activity">
    <reaction evidence="4">
        <text>a medium-chain fatty acid + ATP + H(+) = a medium-chain fatty acyl-AMP + diphosphate</text>
        <dbReference type="Rhea" id="RHEA:56920"/>
        <dbReference type="ChEBI" id="CHEBI:15378"/>
        <dbReference type="ChEBI" id="CHEBI:30616"/>
        <dbReference type="ChEBI" id="CHEBI:33019"/>
        <dbReference type="ChEBI" id="CHEBI:59558"/>
        <dbReference type="ChEBI" id="CHEBI:141140"/>
    </reaction>
</comment>
<comment type="catalytic activity">
    <reaction evidence="4">
        <text>a medium-chain fatty acyl-AMP + holo-[ACP] = a medium-chain fatty acyl-[ACP] + AMP + H(+)</text>
        <dbReference type="Rhea" id="RHEA:63636"/>
        <dbReference type="Rhea" id="RHEA-COMP:9685"/>
        <dbReference type="Rhea" id="RHEA-COMP:12681"/>
        <dbReference type="ChEBI" id="CHEBI:15378"/>
        <dbReference type="ChEBI" id="CHEBI:64479"/>
        <dbReference type="ChEBI" id="CHEBI:133242"/>
        <dbReference type="ChEBI" id="CHEBI:141140"/>
        <dbReference type="ChEBI" id="CHEBI:456215"/>
    </reaction>
</comment>
<comment type="catalytic activity">
    <reaction evidence="1">
        <text>decanoate + holo-[ACP] + ATP = decanoyl-[ACP] + AMP + diphosphate</text>
        <dbReference type="Rhea" id="RHEA:65004"/>
        <dbReference type="Rhea" id="RHEA-COMP:9640"/>
        <dbReference type="Rhea" id="RHEA-COMP:9685"/>
        <dbReference type="ChEBI" id="CHEBI:27689"/>
        <dbReference type="ChEBI" id="CHEBI:30616"/>
        <dbReference type="ChEBI" id="CHEBI:33019"/>
        <dbReference type="ChEBI" id="CHEBI:64479"/>
        <dbReference type="ChEBI" id="CHEBI:78468"/>
        <dbReference type="ChEBI" id="CHEBI:456215"/>
    </reaction>
</comment>
<comment type="catalytic activity">
    <reaction evidence="4">
        <text>decanoate + ATP + H(+) = decanoyl-AMP + diphosphate</text>
        <dbReference type="Rhea" id="RHEA:65008"/>
        <dbReference type="ChEBI" id="CHEBI:15378"/>
        <dbReference type="ChEBI" id="CHEBI:27689"/>
        <dbReference type="ChEBI" id="CHEBI:30616"/>
        <dbReference type="ChEBI" id="CHEBI:33019"/>
        <dbReference type="ChEBI" id="CHEBI:156261"/>
    </reaction>
</comment>
<comment type="catalytic activity">
    <reaction evidence="4">
        <text>decanoyl-AMP + holo-[ACP] = decanoyl-[ACP] + AMP + H(+)</text>
        <dbReference type="Rhea" id="RHEA:65012"/>
        <dbReference type="Rhea" id="RHEA-COMP:9640"/>
        <dbReference type="Rhea" id="RHEA-COMP:9685"/>
        <dbReference type="ChEBI" id="CHEBI:15378"/>
        <dbReference type="ChEBI" id="CHEBI:64479"/>
        <dbReference type="ChEBI" id="CHEBI:78468"/>
        <dbReference type="ChEBI" id="CHEBI:156261"/>
        <dbReference type="ChEBI" id="CHEBI:456215"/>
    </reaction>
</comment>
<comment type="similarity">
    <text evidence="3">Belongs to the ATP-dependent AMP-binding enzyme family.</text>
</comment>
<feature type="chain" id="PRO_0000459980" description="Medium-chain-fatty-acid--[acyl-carrier-protein] ligase TtuA">
    <location>
        <begin position="1"/>
        <end position="642"/>
    </location>
</feature>
<evidence type="ECO:0000269" key="1">
    <source>
    </source>
</evidence>
<evidence type="ECO:0000303" key="2">
    <source>
    </source>
</evidence>
<evidence type="ECO:0000305" key="3"/>
<evidence type="ECO:0000305" key="4">
    <source>
    </source>
</evidence>
<evidence type="ECO:0000312" key="5">
    <source>
        <dbReference type="EMBL" id="ACR14084.1"/>
    </source>
</evidence>
<accession>C5BK10</accession>
<name>TTUA_TERTT</name>